<accession>Q9L3B2</accession>
<accession>Q5FS89</accession>
<reference key="1">
    <citation type="journal article" date="2000" name="FEMS Microbiol. Lett.">
        <title>The pyrroloquinoline quinone synthesis genes of Gluconobacter oxydans.</title>
        <authorList>
            <person name="Felder M."/>
            <person name="Gupta A."/>
            <person name="Verma V."/>
            <person name="Kumar A."/>
            <person name="Qazi G.N."/>
            <person name="Cullum J."/>
        </authorList>
    </citation>
    <scope>NUCLEOTIDE SEQUENCE [GENOMIC DNA]</scope>
    <source>
        <strain>ATCC 9937 / LMG 1404 / NCIMB 8084</strain>
    </source>
</reference>
<reference key="2">
    <citation type="journal article" date="2005" name="Nat. Biotechnol.">
        <title>Complete genome sequence of the acetic acid bacterium Gluconobacter oxydans.</title>
        <authorList>
            <person name="Prust C."/>
            <person name="Hoffmeister M."/>
            <person name="Liesegang H."/>
            <person name="Wiezer A."/>
            <person name="Fricke W.F."/>
            <person name="Ehrenreich A."/>
            <person name="Gottschalk G."/>
            <person name="Deppenmeier U."/>
        </authorList>
    </citation>
    <scope>NUCLEOTIDE SEQUENCE [LARGE SCALE GENOMIC DNA]</scope>
    <source>
        <strain>621H</strain>
    </source>
</reference>
<feature type="chain" id="PRO_0000219978" description="Pyrroloquinoline-quinone synthase">
    <location>
        <begin position="1"/>
        <end position="239"/>
    </location>
</feature>
<feature type="sequence conflict" description="In Ref. 1; CAB83199." evidence="2" ref="1">
    <original>A</original>
    <variation>D</variation>
    <location>
        <position position="69"/>
    </location>
</feature>
<feature type="sequence conflict" description="In Ref. 1; CAB83199." evidence="2" ref="1">
    <original>GT</original>
    <variation>EP</variation>
    <location>
        <begin position="88"/>
        <end position="89"/>
    </location>
</feature>
<name>PQQC_GLUOX</name>
<keyword id="KW-0560">Oxidoreductase</keyword>
<keyword id="KW-0884">PQQ biosynthesis</keyword>
<keyword id="KW-1185">Reference proteome</keyword>
<gene>
    <name evidence="1" type="primary">pqqC</name>
    <name type="ordered locus">GOX0985</name>
</gene>
<organism>
    <name type="scientific">Gluconobacter oxydans (strain 621H)</name>
    <name type="common">Gluconobacter suboxydans</name>
    <dbReference type="NCBI Taxonomy" id="290633"/>
    <lineage>
        <taxon>Bacteria</taxon>
        <taxon>Pseudomonadati</taxon>
        <taxon>Pseudomonadota</taxon>
        <taxon>Alphaproteobacteria</taxon>
        <taxon>Acetobacterales</taxon>
        <taxon>Acetobacteraceae</taxon>
        <taxon>Gluconobacter</taxon>
    </lineage>
</organism>
<comment type="function">
    <text evidence="1">Ring cyclization and eight-electron oxidation of 3a-(2-amino-2-carboxyethyl)-4,5-dioxo-4,5,6,7,8,9-hexahydroquinoline-7,9-dicarboxylic-acid to PQQ.</text>
</comment>
<comment type="catalytic activity">
    <reaction evidence="1">
        <text>6-(2-amino-2-carboxyethyl)-7,8-dioxo-1,2,3,4,7,8-hexahydroquinoline-2,4-dicarboxylate + 3 O2 = pyrroloquinoline quinone + 2 H2O2 + 2 H2O + H(+)</text>
        <dbReference type="Rhea" id="RHEA:10692"/>
        <dbReference type="ChEBI" id="CHEBI:15377"/>
        <dbReference type="ChEBI" id="CHEBI:15378"/>
        <dbReference type="ChEBI" id="CHEBI:15379"/>
        <dbReference type="ChEBI" id="CHEBI:16240"/>
        <dbReference type="ChEBI" id="CHEBI:58442"/>
        <dbReference type="ChEBI" id="CHEBI:58778"/>
        <dbReference type="EC" id="1.3.3.11"/>
    </reaction>
</comment>
<comment type="pathway">
    <text evidence="1">Cofactor biosynthesis; pyrroloquinoline quinone biosynthesis.</text>
</comment>
<comment type="similarity">
    <text evidence="1">Belongs to the PqqC family.</text>
</comment>
<evidence type="ECO:0000255" key="1">
    <source>
        <dbReference type="HAMAP-Rule" id="MF_00654"/>
    </source>
</evidence>
<evidence type="ECO:0000305" key="2"/>
<protein>
    <recommendedName>
        <fullName evidence="1">Pyrroloquinoline-quinone synthase</fullName>
        <ecNumber evidence="1">1.3.3.11</ecNumber>
    </recommendedName>
    <alternativeName>
        <fullName evidence="1">Coenzyme PQQ synthesis protein C</fullName>
    </alternativeName>
    <alternativeName>
        <fullName evidence="1">Pyrroloquinoline quinone biosynthesis protein C</fullName>
    </alternativeName>
</protein>
<dbReference type="EC" id="1.3.3.11" evidence="1"/>
<dbReference type="EMBL" id="AJ277117">
    <property type="protein sequence ID" value="CAB83199.1"/>
    <property type="molecule type" value="Genomic_DNA"/>
</dbReference>
<dbReference type="EMBL" id="CP000009">
    <property type="protein sequence ID" value="AAW60757.1"/>
    <property type="molecule type" value="Genomic_DNA"/>
</dbReference>
<dbReference type="RefSeq" id="WP_011252552.1">
    <property type="nucleotide sequence ID" value="NC_006677.1"/>
</dbReference>
<dbReference type="SMR" id="Q9L3B2"/>
<dbReference type="STRING" id="290633.GOX0985"/>
<dbReference type="KEGG" id="gox:GOX0985"/>
<dbReference type="eggNOG" id="COG5424">
    <property type="taxonomic scope" value="Bacteria"/>
</dbReference>
<dbReference type="HOGENOM" id="CLU_080136_0_0_5"/>
<dbReference type="BRENDA" id="1.3.3.11">
    <property type="organism ID" value="38"/>
</dbReference>
<dbReference type="UniPathway" id="UPA00539"/>
<dbReference type="Proteomes" id="UP000006375">
    <property type="component" value="Chromosome"/>
</dbReference>
<dbReference type="GO" id="GO:0033732">
    <property type="term" value="F:pyrroloquinoline-quinone synthase activity"/>
    <property type="evidence" value="ECO:0007669"/>
    <property type="project" value="UniProtKB-EC"/>
</dbReference>
<dbReference type="GO" id="GO:0018189">
    <property type="term" value="P:pyrroloquinoline quinone biosynthetic process"/>
    <property type="evidence" value="ECO:0007669"/>
    <property type="project" value="UniProtKB-UniRule"/>
</dbReference>
<dbReference type="GO" id="GO:0006790">
    <property type="term" value="P:sulfur compound metabolic process"/>
    <property type="evidence" value="ECO:0007669"/>
    <property type="project" value="UniProtKB-ARBA"/>
</dbReference>
<dbReference type="Gene3D" id="1.20.910.10">
    <property type="entry name" value="Heme oxygenase-like"/>
    <property type="match status" value="1"/>
</dbReference>
<dbReference type="HAMAP" id="MF_00654">
    <property type="entry name" value="PQQ_syn_PqqC"/>
    <property type="match status" value="1"/>
</dbReference>
<dbReference type="InterPro" id="IPR016084">
    <property type="entry name" value="Haem_Oase-like_multi-hlx"/>
</dbReference>
<dbReference type="InterPro" id="IPR011845">
    <property type="entry name" value="PqqC"/>
</dbReference>
<dbReference type="InterPro" id="IPR039068">
    <property type="entry name" value="PqqC-like"/>
</dbReference>
<dbReference type="InterPro" id="IPR004305">
    <property type="entry name" value="Thiaminase-2/PQQC"/>
</dbReference>
<dbReference type="NCBIfam" id="TIGR02111">
    <property type="entry name" value="PQQ_syn_pqqC"/>
    <property type="match status" value="1"/>
</dbReference>
<dbReference type="PANTHER" id="PTHR40279:SF3">
    <property type="entry name" value="4-AMINOBENZOATE SYNTHASE"/>
    <property type="match status" value="1"/>
</dbReference>
<dbReference type="PANTHER" id="PTHR40279">
    <property type="entry name" value="PQQC-LIKE PROTEIN"/>
    <property type="match status" value="1"/>
</dbReference>
<dbReference type="Pfam" id="PF03070">
    <property type="entry name" value="TENA_THI-4"/>
    <property type="match status" value="1"/>
</dbReference>
<dbReference type="SUPFAM" id="SSF48613">
    <property type="entry name" value="Heme oxygenase-like"/>
    <property type="match status" value="1"/>
</dbReference>
<sequence>MTLLTPDQLEAQLRQIGAERYHNRHPFHRKLHDGKLDKAQVQAWALNRYYYQARIPAKDATLLARLPTAELRREWRRRIEDHDGTEPGTGGVARWLMLTDGLGLDRDYVESLDGLLPATRFSVDAYVNFVRDQSILAAIASSLTELFSPTIISERVSGMLRHYDFVSEKTLAYFTPRLTQAPRDSDFALAYVREKARTPEQQKEVLGALEFKCSVLWTMLDALDYAYVEGHIPPGAFVP</sequence>
<proteinExistence type="inferred from homology"/>